<proteinExistence type="inferred from homology"/>
<sequence>MNIKRKPEWLRIKLGEGRNLNYVKGLLKKFSLNTVCEEANCPNQIECFSKKTATFMILGSDCSRSCGFCNVSHGALQPIDPNEPENVANAVAELGLKHVVITSVTRDDLADGGAQHFADVVNQIKSKNKETMIEVLIPDFQGNKEALQKVVQSKPDIINHNMETIPRLYPEIRPKAEYVQSLELLKNVKEMDPEILTKSGVMVGLGEGEEELIEVFKDLRGSGCDFLTVGQYLPPSTKHYPLKAYISPEVFERYKEEALKIGFSFVASSPLVRSSYNAAEALEKHEEMKS</sequence>
<accession>A6TWC9</accession>
<gene>
    <name evidence="1" type="primary">lipA</name>
    <name type="ordered locus">Amet_4425</name>
</gene>
<evidence type="ECO:0000255" key="1">
    <source>
        <dbReference type="HAMAP-Rule" id="MF_00206"/>
    </source>
</evidence>
<evidence type="ECO:0000255" key="2">
    <source>
        <dbReference type="PROSITE-ProRule" id="PRU01266"/>
    </source>
</evidence>
<organism>
    <name type="scientific">Alkaliphilus metalliredigens (strain QYMF)</name>
    <dbReference type="NCBI Taxonomy" id="293826"/>
    <lineage>
        <taxon>Bacteria</taxon>
        <taxon>Bacillati</taxon>
        <taxon>Bacillota</taxon>
        <taxon>Clostridia</taxon>
        <taxon>Peptostreptococcales</taxon>
        <taxon>Natronincolaceae</taxon>
        <taxon>Alkaliphilus</taxon>
    </lineage>
</organism>
<name>LIPA_ALKMQ</name>
<feature type="chain" id="PRO_1000058572" description="Lipoyl synthase">
    <location>
        <begin position="1"/>
        <end position="290"/>
    </location>
</feature>
<feature type="domain" description="Radical SAM core" evidence="2">
    <location>
        <begin position="48"/>
        <end position="264"/>
    </location>
</feature>
<feature type="binding site" evidence="1">
    <location>
        <position position="36"/>
    </location>
    <ligand>
        <name>[4Fe-4S] cluster</name>
        <dbReference type="ChEBI" id="CHEBI:49883"/>
        <label>1</label>
    </ligand>
</feature>
<feature type="binding site" evidence="1">
    <location>
        <position position="41"/>
    </location>
    <ligand>
        <name>[4Fe-4S] cluster</name>
        <dbReference type="ChEBI" id="CHEBI:49883"/>
        <label>1</label>
    </ligand>
</feature>
<feature type="binding site" evidence="1">
    <location>
        <position position="47"/>
    </location>
    <ligand>
        <name>[4Fe-4S] cluster</name>
        <dbReference type="ChEBI" id="CHEBI:49883"/>
        <label>1</label>
    </ligand>
</feature>
<feature type="binding site" evidence="1">
    <location>
        <position position="62"/>
    </location>
    <ligand>
        <name>[4Fe-4S] cluster</name>
        <dbReference type="ChEBI" id="CHEBI:49883"/>
        <label>2</label>
        <note>4Fe-4S-S-AdoMet</note>
    </ligand>
</feature>
<feature type="binding site" evidence="1">
    <location>
        <position position="66"/>
    </location>
    <ligand>
        <name>[4Fe-4S] cluster</name>
        <dbReference type="ChEBI" id="CHEBI:49883"/>
        <label>2</label>
        <note>4Fe-4S-S-AdoMet</note>
    </ligand>
</feature>
<feature type="binding site" evidence="1">
    <location>
        <position position="69"/>
    </location>
    <ligand>
        <name>[4Fe-4S] cluster</name>
        <dbReference type="ChEBI" id="CHEBI:49883"/>
        <label>2</label>
        <note>4Fe-4S-S-AdoMet</note>
    </ligand>
</feature>
<feature type="binding site" evidence="1">
    <location>
        <position position="275"/>
    </location>
    <ligand>
        <name>[4Fe-4S] cluster</name>
        <dbReference type="ChEBI" id="CHEBI:49883"/>
        <label>1</label>
    </ligand>
</feature>
<reference key="1">
    <citation type="journal article" date="2016" name="Genome Announc.">
        <title>Complete genome sequence of Alkaliphilus metalliredigens strain QYMF, an alkaliphilic and metal-reducing bacterium isolated from borax-contaminated leachate ponds.</title>
        <authorList>
            <person name="Hwang C."/>
            <person name="Copeland A."/>
            <person name="Lucas S."/>
            <person name="Lapidus A."/>
            <person name="Barry K."/>
            <person name="Detter J.C."/>
            <person name="Glavina Del Rio T."/>
            <person name="Hammon N."/>
            <person name="Israni S."/>
            <person name="Dalin E."/>
            <person name="Tice H."/>
            <person name="Pitluck S."/>
            <person name="Chertkov O."/>
            <person name="Brettin T."/>
            <person name="Bruce D."/>
            <person name="Han C."/>
            <person name="Schmutz J."/>
            <person name="Larimer F."/>
            <person name="Land M.L."/>
            <person name="Hauser L."/>
            <person name="Kyrpides N."/>
            <person name="Mikhailova N."/>
            <person name="Ye Q."/>
            <person name="Zhou J."/>
            <person name="Richardson P."/>
            <person name="Fields M.W."/>
        </authorList>
    </citation>
    <scope>NUCLEOTIDE SEQUENCE [LARGE SCALE GENOMIC DNA]</scope>
    <source>
        <strain>QYMF</strain>
    </source>
</reference>
<keyword id="KW-0004">4Fe-4S</keyword>
<keyword id="KW-0963">Cytoplasm</keyword>
<keyword id="KW-0408">Iron</keyword>
<keyword id="KW-0411">Iron-sulfur</keyword>
<keyword id="KW-0479">Metal-binding</keyword>
<keyword id="KW-1185">Reference proteome</keyword>
<keyword id="KW-0949">S-adenosyl-L-methionine</keyword>
<keyword id="KW-0808">Transferase</keyword>
<protein>
    <recommendedName>
        <fullName evidence="1">Lipoyl synthase</fullName>
        <ecNumber evidence="1">2.8.1.8</ecNumber>
    </recommendedName>
    <alternativeName>
        <fullName evidence="1">Lip-syn</fullName>
        <shortName evidence="1">LS</shortName>
    </alternativeName>
    <alternativeName>
        <fullName evidence="1">Lipoate synthase</fullName>
    </alternativeName>
    <alternativeName>
        <fullName evidence="1">Lipoic acid synthase</fullName>
    </alternativeName>
    <alternativeName>
        <fullName evidence="1">Sulfur insertion protein LipA</fullName>
    </alternativeName>
</protein>
<comment type="function">
    <text evidence="1">Catalyzes the radical-mediated insertion of two sulfur atoms into the C-6 and C-8 positions of the octanoyl moiety bound to the lipoyl domains of lipoate-dependent enzymes, thereby converting the octanoylated domains into lipoylated derivatives.</text>
</comment>
<comment type="catalytic activity">
    <reaction evidence="1">
        <text>[[Fe-S] cluster scaffold protein carrying a second [4Fe-4S](2+) cluster] + N(6)-octanoyl-L-lysyl-[protein] + 2 oxidized [2Fe-2S]-[ferredoxin] + 2 S-adenosyl-L-methionine + 4 H(+) = [[Fe-S] cluster scaffold protein] + N(6)-[(R)-dihydrolipoyl]-L-lysyl-[protein] + 4 Fe(3+) + 2 hydrogen sulfide + 2 5'-deoxyadenosine + 2 L-methionine + 2 reduced [2Fe-2S]-[ferredoxin]</text>
        <dbReference type="Rhea" id="RHEA:16585"/>
        <dbReference type="Rhea" id="RHEA-COMP:9928"/>
        <dbReference type="Rhea" id="RHEA-COMP:10000"/>
        <dbReference type="Rhea" id="RHEA-COMP:10001"/>
        <dbReference type="Rhea" id="RHEA-COMP:10475"/>
        <dbReference type="Rhea" id="RHEA-COMP:14568"/>
        <dbReference type="Rhea" id="RHEA-COMP:14569"/>
        <dbReference type="ChEBI" id="CHEBI:15378"/>
        <dbReference type="ChEBI" id="CHEBI:17319"/>
        <dbReference type="ChEBI" id="CHEBI:29034"/>
        <dbReference type="ChEBI" id="CHEBI:29919"/>
        <dbReference type="ChEBI" id="CHEBI:33722"/>
        <dbReference type="ChEBI" id="CHEBI:33737"/>
        <dbReference type="ChEBI" id="CHEBI:33738"/>
        <dbReference type="ChEBI" id="CHEBI:57844"/>
        <dbReference type="ChEBI" id="CHEBI:59789"/>
        <dbReference type="ChEBI" id="CHEBI:78809"/>
        <dbReference type="ChEBI" id="CHEBI:83100"/>
        <dbReference type="EC" id="2.8.1.8"/>
    </reaction>
</comment>
<comment type="cofactor">
    <cofactor evidence="1">
        <name>[4Fe-4S] cluster</name>
        <dbReference type="ChEBI" id="CHEBI:49883"/>
    </cofactor>
    <text evidence="1">Binds 2 [4Fe-4S] clusters per subunit. One cluster is coordinated with 3 cysteines and an exchangeable S-adenosyl-L-methionine.</text>
</comment>
<comment type="pathway">
    <text evidence="1">Protein modification; protein lipoylation via endogenous pathway; protein N(6)-(lipoyl)lysine from octanoyl-[acyl-carrier-protein]: step 2/2.</text>
</comment>
<comment type="subcellular location">
    <subcellularLocation>
        <location evidence="1">Cytoplasm</location>
    </subcellularLocation>
</comment>
<comment type="similarity">
    <text evidence="1">Belongs to the radical SAM superfamily. Lipoyl synthase family.</text>
</comment>
<dbReference type="EC" id="2.8.1.8" evidence="1"/>
<dbReference type="EMBL" id="CP000724">
    <property type="protein sequence ID" value="ABR50497.1"/>
    <property type="molecule type" value="Genomic_DNA"/>
</dbReference>
<dbReference type="SMR" id="A6TWC9"/>
<dbReference type="STRING" id="293826.Amet_4425"/>
<dbReference type="KEGG" id="amt:Amet_4425"/>
<dbReference type="eggNOG" id="COG0320">
    <property type="taxonomic scope" value="Bacteria"/>
</dbReference>
<dbReference type="HOGENOM" id="CLU_033144_2_1_9"/>
<dbReference type="OrthoDB" id="9787898at2"/>
<dbReference type="UniPathway" id="UPA00538">
    <property type="reaction ID" value="UER00593"/>
</dbReference>
<dbReference type="Proteomes" id="UP000001572">
    <property type="component" value="Chromosome"/>
</dbReference>
<dbReference type="GO" id="GO:0005737">
    <property type="term" value="C:cytoplasm"/>
    <property type="evidence" value="ECO:0007669"/>
    <property type="project" value="UniProtKB-SubCell"/>
</dbReference>
<dbReference type="GO" id="GO:0051539">
    <property type="term" value="F:4 iron, 4 sulfur cluster binding"/>
    <property type="evidence" value="ECO:0007669"/>
    <property type="project" value="UniProtKB-UniRule"/>
</dbReference>
<dbReference type="GO" id="GO:0016992">
    <property type="term" value="F:lipoate synthase activity"/>
    <property type="evidence" value="ECO:0007669"/>
    <property type="project" value="UniProtKB-UniRule"/>
</dbReference>
<dbReference type="GO" id="GO:0046872">
    <property type="term" value="F:metal ion binding"/>
    <property type="evidence" value="ECO:0007669"/>
    <property type="project" value="UniProtKB-KW"/>
</dbReference>
<dbReference type="FunFam" id="3.20.20.70:FF:000040">
    <property type="entry name" value="Lipoyl synthase"/>
    <property type="match status" value="1"/>
</dbReference>
<dbReference type="Gene3D" id="3.20.20.70">
    <property type="entry name" value="Aldolase class I"/>
    <property type="match status" value="1"/>
</dbReference>
<dbReference type="HAMAP" id="MF_00206">
    <property type="entry name" value="Lipoyl_synth"/>
    <property type="match status" value="1"/>
</dbReference>
<dbReference type="InterPro" id="IPR013785">
    <property type="entry name" value="Aldolase_TIM"/>
</dbReference>
<dbReference type="InterPro" id="IPR006638">
    <property type="entry name" value="Elp3/MiaA/NifB-like_rSAM"/>
</dbReference>
<dbReference type="InterPro" id="IPR031691">
    <property type="entry name" value="LIAS_N"/>
</dbReference>
<dbReference type="InterPro" id="IPR003698">
    <property type="entry name" value="Lipoyl_synth"/>
</dbReference>
<dbReference type="InterPro" id="IPR007197">
    <property type="entry name" value="rSAM"/>
</dbReference>
<dbReference type="NCBIfam" id="TIGR00510">
    <property type="entry name" value="lipA"/>
    <property type="match status" value="1"/>
</dbReference>
<dbReference type="NCBIfam" id="NF004019">
    <property type="entry name" value="PRK05481.1"/>
    <property type="match status" value="1"/>
</dbReference>
<dbReference type="NCBIfam" id="NF009544">
    <property type="entry name" value="PRK12928.1"/>
    <property type="match status" value="1"/>
</dbReference>
<dbReference type="PANTHER" id="PTHR10949">
    <property type="entry name" value="LIPOYL SYNTHASE"/>
    <property type="match status" value="1"/>
</dbReference>
<dbReference type="PANTHER" id="PTHR10949:SF0">
    <property type="entry name" value="LIPOYL SYNTHASE, MITOCHONDRIAL"/>
    <property type="match status" value="1"/>
</dbReference>
<dbReference type="Pfam" id="PF16881">
    <property type="entry name" value="LIAS_N"/>
    <property type="match status" value="1"/>
</dbReference>
<dbReference type="Pfam" id="PF04055">
    <property type="entry name" value="Radical_SAM"/>
    <property type="match status" value="1"/>
</dbReference>
<dbReference type="PIRSF" id="PIRSF005963">
    <property type="entry name" value="Lipoyl_synth"/>
    <property type="match status" value="1"/>
</dbReference>
<dbReference type="SFLD" id="SFLDF00271">
    <property type="entry name" value="lipoyl_synthase"/>
    <property type="match status" value="1"/>
</dbReference>
<dbReference type="SFLD" id="SFLDS00029">
    <property type="entry name" value="Radical_SAM"/>
    <property type="match status" value="1"/>
</dbReference>
<dbReference type="SMART" id="SM00729">
    <property type="entry name" value="Elp3"/>
    <property type="match status" value="1"/>
</dbReference>
<dbReference type="SUPFAM" id="SSF102114">
    <property type="entry name" value="Radical SAM enzymes"/>
    <property type="match status" value="1"/>
</dbReference>
<dbReference type="PROSITE" id="PS51918">
    <property type="entry name" value="RADICAL_SAM"/>
    <property type="match status" value="1"/>
</dbReference>